<proteinExistence type="evidence at transcript level"/>
<comment type="function">
    <text evidence="1">Transcription factor involved in DNA damage responses, morphogenesis, and virulence.</text>
</comment>
<comment type="subcellular location">
    <subcellularLocation>
        <location evidence="2">Nucleus</location>
    </subcellularLocation>
</comment>
<comment type="induction">
    <text evidence="4">Induced during biofilm formation.</text>
</comment>
<comment type="similarity">
    <text evidence="2">Belongs to the RFX family.</text>
</comment>
<sequence length="851" mass="96111">MSSDQTPQNRNRGGDDSYNPRLQQQTSQIPSTGPDQGQQRERSQEQESDHEHQQAQQHLHQFQQSNLTPSTTAFPSSTSIPTFSKQDQGYHNQFSSPQSSYRKIGNFAQSSNAPFLNEPHPIYATNYQQNVPSQSQFQFDYSSPYIGQSQSQSQSQSQAQPQPHPQPQTYQQLPHYSQASVSSLPPTYQAFHSMHEASSADNDSATNITTPQKRKKQKRSESVTPNTGENELKQLALRSSNIPLSELAQKVKQLENDSTTTSVSLEQSKMKENKETQRQLFGMVWLLNSCDLAPTAVIPRNRIYARYVQVCADNNLAPVSPASFGKLVKILYPNITTRRLGMRGQSKYHYCGIKLTGDENMQSQLLNYQQKQKHQSQEQYNQQAQVGSSTSSAGLAGHQSPMSSCNSSVSYEESPGPIISRAHTPSFSPINTPTISMSKSLNDQLPSISHMKFIPNLFYLLNSNVATSSNPHEPIQLPSIYPYLSKDADHDIADTLYSLYKVHVNSIFEALRYMQLKKLFSSFSTFNNILTAPVLKLYTTESLAEWVMKCDLIMYKKMIRMLSKLQLQLLIPQEQLLQLKQIADGYIKTLSTSLINSKVSQNFVMMKLKLAKHFVNLLNRLIKVIETGQPASRILNDDNEKNTMTQDWMKLDIHGIICREMPCNDNNIDTLTYILTGEVVNLIKVKSDNEQAPTMSDFANYISNLPSRFPEVNTRLFLLLASNLLTTCLREISLSGGEGFGAWWIVRCWIDEYLAWSFEVGGFFQDDLQEIVAQQQLNVQLPPPSLSSLPQTQQQNPVIQEETGTQEESLGNIDLLETSFDFDAKTSQPYQQPSHTESLLNFETNIDNLLN</sequence>
<keyword id="KW-0227">DNA damage</keyword>
<keyword id="KW-0238">DNA-binding</keyword>
<keyword id="KW-0539">Nucleus</keyword>
<keyword id="KW-1185">Reference proteome</keyword>
<keyword id="KW-0678">Repressor</keyword>
<keyword id="KW-0804">Transcription</keyword>
<keyword id="KW-0805">Transcription regulation</keyword>
<keyword id="KW-0843">Virulence</keyword>
<feature type="chain" id="PRO_0000426089" description="Transcriptional regulator RFX1">
    <location>
        <begin position="1"/>
        <end position="851"/>
    </location>
</feature>
<feature type="DNA-binding region" description="RFX-type winged-helix" evidence="2">
    <location>
        <begin position="282"/>
        <end position="357"/>
    </location>
</feature>
<feature type="region of interest" description="Disordered" evidence="3">
    <location>
        <begin position="1"/>
        <end position="121"/>
    </location>
</feature>
<feature type="region of interest" description="Disordered" evidence="3">
    <location>
        <begin position="134"/>
        <end position="170"/>
    </location>
</feature>
<feature type="region of interest" description="Disordered" evidence="3">
    <location>
        <begin position="195"/>
        <end position="230"/>
    </location>
</feature>
<feature type="region of interest" description="Disordered" evidence="3">
    <location>
        <begin position="368"/>
        <end position="411"/>
    </location>
</feature>
<feature type="region of interest" description="Disordered" evidence="3">
    <location>
        <begin position="783"/>
        <end position="806"/>
    </location>
</feature>
<feature type="compositionally biased region" description="Polar residues" evidence="3">
    <location>
        <begin position="1"/>
        <end position="11"/>
    </location>
</feature>
<feature type="compositionally biased region" description="Polar residues" evidence="3">
    <location>
        <begin position="20"/>
        <end position="34"/>
    </location>
</feature>
<feature type="compositionally biased region" description="Basic and acidic residues" evidence="3">
    <location>
        <begin position="38"/>
        <end position="53"/>
    </location>
</feature>
<feature type="compositionally biased region" description="Low complexity" evidence="3">
    <location>
        <begin position="54"/>
        <end position="84"/>
    </location>
</feature>
<feature type="compositionally biased region" description="Polar residues" evidence="3">
    <location>
        <begin position="85"/>
        <end position="114"/>
    </location>
</feature>
<feature type="compositionally biased region" description="Low complexity" evidence="3">
    <location>
        <begin position="141"/>
        <end position="170"/>
    </location>
</feature>
<feature type="compositionally biased region" description="Polar residues" evidence="3">
    <location>
        <begin position="199"/>
        <end position="211"/>
    </location>
</feature>
<feature type="compositionally biased region" description="Polar residues" evidence="3">
    <location>
        <begin position="384"/>
        <end position="393"/>
    </location>
</feature>
<feature type="compositionally biased region" description="Low complexity" evidence="3">
    <location>
        <begin position="783"/>
        <end position="797"/>
    </location>
</feature>
<protein>
    <recommendedName>
        <fullName>Transcriptional regulator RFX1</fullName>
    </recommendedName>
</protein>
<accession>Q59V88</accession>
<accession>A0A1D8PT55</accession>
<evidence type="ECO:0000250" key="1"/>
<evidence type="ECO:0000255" key="2">
    <source>
        <dbReference type="PROSITE-ProRule" id="PRU00858"/>
    </source>
</evidence>
<evidence type="ECO:0000256" key="3">
    <source>
        <dbReference type="SAM" id="MobiDB-lite"/>
    </source>
</evidence>
<evidence type="ECO:0000269" key="4">
    <source>
    </source>
</evidence>
<dbReference type="EMBL" id="CP017630">
    <property type="protein sequence ID" value="AOW31322.1"/>
    <property type="molecule type" value="Genomic_DNA"/>
</dbReference>
<dbReference type="RefSeq" id="XP_713492.2">
    <property type="nucleotide sequence ID" value="XM_708399.2"/>
</dbReference>
<dbReference type="SMR" id="Q59V88"/>
<dbReference type="STRING" id="237561.Q59V88"/>
<dbReference type="EnsemblFungi" id="CR_06110C_A-T">
    <property type="protein sequence ID" value="CR_06110C_A-T-p1"/>
    <property type="gene ID" value="CR_06110C_A"/>
</dbReference>
<dbReference type="GeneID" id="3644844"/>
<dbReference type="KEGG" id="cal:CAALFM_CR06110CA"/>
<dbReference type="CGD" id="CAL0000174984">
    <property type="gene designation" value="RFX1"/>
</dbReference>
<dbReference type="VEuPathDB" id="FungiDB:CR_06110C_A"/>
<dbReference type="eggNOG" id="KOG3712">
    <property type="taxonomic scope" value="Eukaryota"/>
</dbReference>
<dbReference type="HOGENOM" id="CLU_011526_1_0_1"/>
<dbReference type="InParanoid" id="Q59V88"/>
<dbReference type="OrthoDB" id="10056949at2759"/>
<dbReference type="PRO" id="PR:Q59V88"/>
<dbReference type="Proteomes" id="UP000000559">
    <property type="component" value="Chromosome R"/>
</dbReference>
<dbReference type="GO" id="GO:0005634">
    <property type="term" value="C:nucleus"/>
    <property type="evidence" value="ECO:0007669"/>
    <property type="project" value="UniProtKB-SubCell"/>
</dbReference>
<dbReference type="GO" id="GO:0001216">
    <property type="term" value="F:DNA-binding transcription activator activity"/>
    <property type="evidence" value="ECO:0000315"/>
    <property type="project" value="CGD"/>
</dbReference>
<dbReference type="GO" id="GO:0000981">
    <property type="term" value="F:DNA-binding transcription factor activity, RNA polymerase II-specific"/>
    <property type="evidence" value="ECO:0000318"/>
    <property type="project" value="GO_Central"/>
</dbReference>
<dbReference type="GO" id="GO:0001217">
    <property type="term" value="F:DNA-binding transcription repressor activity"/>
    <property type="evidence" value="ECO:0000314"/>
    <property type="project" value="CGD"/>
</dbReference>
<dbReference type="GO" id="GO:0000978">
    <property type="term" value="F:RNA polymerase II cis-regulatory region sequence-specific DNA binding"/>
    <property type="evidence" value="ECO:0000318"/>
    <property type="project" value="GO_Central"/>
</dbReference>
<dbReference type="GO" id="GO:0006974">
    <property type="term" value="P:DNA damage response"/>
    <property type="evidence" value="ECO:0007669"/>
    <property type="project" value="UniProtKB-KW"/>
</dbReference>
<dbReference type="GO" id="GO:0007162">
    <property type="term" value="P:negative regulation of cell adhesion"/>
    <property type="evidence" value="ECO:0000315"/>
    <property type="project" value="CGD"/>
</dbReference>
<dbReference type="GO" id="GO:0006357">
    <property type="term" value="P:regulation of transcription by RNA polymerase II"/>
    <property type="evidence" value="ECO:0000318"/>
    <property type="project" value="GO_Central"/>
</dbReference>
<dbReference type="Gene3D" id="1.10.10.10">
    <property type="entry name" value="Winged helix-like DNA-binding domain superfamily/Winged helix DNA-binding domain"/>
    <property type="match status" value="1"/>
</dbReference>
<dbReference type="InterPro" id="IPR003150">
    <property type="entry name" value="DNA-bd_RFX"/>
</dbReference>
<dbReference type="InterPro" id="IPR039779">
    <property type="entry name" value="RFX-like"/>
</dbReference>
<dbReference type="InterPro" id="IPR036388">
    <property type="entry name" value="WH-like_DNA-bd_sf"/>
</dbReference>
<dbReference type="InterPro" id="IPR036390">
    <property type="entry name" value="WH_DNA-bd_sf"/>
</dbReference>
<dbReference type="PANTHER" id="PTHR12619">
    <property type="entry name" value="RFX TRANSCRIPTION FACTOR FAMILY"/>
    <property type="match status" value="1"/>
</dbReference>
<dbReference type="PANTHER" id="PTHR12619:SF5">
    <property type="entry name" value="TRANSCRIPTION FACTOR RFX4"/>
    <property type="match status" value="1"/>
</dbReference>
<dbReference type="Pfam" id="PF25340">
    <property type="entry name" value="BCD_RFX"/>
    <property type="match status" value="1"/>
</dbReference>
<dbReference type="Pfam" id="PF02257">
    <property type="entry name" value="RFX_DNA_binding"/>
    <property type="match status" value="1"/>
</dbReference>
<dbReference type="SUPFAM" id="SSF46785">
    <property type="entry name" value="Winged helix' DNA-binding domain"/>
    <property type="match status" value="1"/>
</dbReference>
<dbReference type="PROSITE" id="PS51526">
    <property type="entry name" value="RFX_DBD"/>
    <property type="match status" value="1"/>
</dbReference>
<name>RFX1_CANAL</name>
<organism>
    <name type="scientific">Candida albicans (strain SC5314 / ATCC MYA-2876)</name>
    <name type="common">Yeast</name>
    <dbReference type="NCBI Taxonomy" id="237561"/>
    <lineage>
        <taxon>Eukaryota</taxon>
        <taxon>Fungi</taxon>
        <taxon>Dikarya</taxon>
        <taxon>Ascomycota</taxon>
        <taxon>Saccharomycotina</taxon>
        <taxon>Pichiomycetes</taxon>
        <taxon>Debaryomycetaceae</taxon>
        <taxon>Candida/Lodderomyces clade</taxon>
        <taxon>Candida</taxon>
    </lineage>
</organism>
<gene>
    <name type="primary">RFX1</name>
    <name type="ordered locus">CAALFM_CR06110CA</name>
    <name type="ORF">CaO19.11346</name>
    <name type="ORF">CaO19.3865</name>
</gene>
<reference key="1">
    <citation type="journal article" date="2004" name="Proc. Natl. Acad. Sci. U.S.A.">
        <title>The diploid genome sequence of Candida albicans.</title>
        <authorList>
            <person name="Jones T."/>
            <person name="Federspiel N.A."/>
            <person name="Chibana H."/>
            <person name="Dungan J."/>
            <person name="Kalman S."/>
            <person name="Magee B.B."/>
            <person name="Newport G."/>
            <person name="Thorstenson Y.R."/>
            <person name="Agabian N."/>
            <person name="Magee P.T."/>
            <person name="Davis R.W."/>
            <person name="Scherer S."/>
        </authorList>
    </citation>
    <scope>NUCLEOTIDE SEQUENCE [LARGE SCALE GENOMIC DNA]</scope>
    <source>
        <strain>SC5314 / ATCC MYA-2876</strain>
    </source>
</reference>
<reference key="2">
    <citation type="journal article" date="2007" name="Genome Biol.">
        <title>Assembly of the Candida albicans genome into sixteen supercontigs aligned on the eight chromosomes.</title>
        <authorList>
            <person name="van het Hoog M."/>
            <person name="Rast T.J."/>
            <person name="Martchenko M."/>
            <person name="Grindle S."/>
            <person name="Dignard D."/>
            <person name="Hogues H."/>
            <person name="Cuomo C."/>
            <person name="Berriman M."/>
            <person name="Scherer S."/>
            <person name="Magee B.B."/>
            <person name="Whiteway M."/>
            <person name="Chibana H."/>
            <person name="Nantel A."/>
            <person name="Magee P.T."/>
        </authorList>
    </citation>
    <scope>GENOME REANNOTATION</scope>
    <source>
        <strain>SC5314 / ATCC MYA-2876</strain>
    </source>
</reference>
<reference key="3">
    <citation type="journal article" date="2013" name="Genome Biol.">
        <title>Assembly of a phased diploid Candida albicans genome facilitates allele-specific measurements and provides a simple model for repeat and indel structure.</title>
        <authorList>
            <person name="Muzzey D."/>
            <person name="Schwartz K."/>
            <person name="Weissman J.S."/>
            <person name="Sherlock G."/>
        </authorList>
    </citation>
    <scope>NUCLEOTIDE SEQUENCE [LARGE SCALE GENOMIC DNA]</scope>
    <scope>GENOME REANNOTATION</scope>
    <source>
        <strain>SC5314 / ATCC MYA-2876</strain>
    </source>
</reference>
<reference key="4">
    <citation type="journal article" date="2012" name="Cell">
        <title>A recently evolved transcriptional network controls biofilm development in Candida albicans.</title>
        <authorList>
            <person name="Nobile C.J."/>
            <person name="Fox E.P."/>
            <person name="Nett J.E."/>
            <person name="Sorrells T.R."/>
            <person name="Mitrovich Q.M."/>
            <person name="Hernday A.D."/>
            <person name="Tuch B.B."/>
            <person name="Andes D.R."/>
            <person name="Johnson A.D."/>
        </authorList>
    </citation>
    <scope>INDUCTION</scope>
</reference>